<dbReference type="EMBL" id="Y08501">
    <property type="protein sequence ID" value="CAA69809.1"/>
    <property type="molecule type" value="Genomic_DNA"/>
</dbReference>
<dbReference type="EMBL" id="BK010421">
    <property type="status" value="NOT_ANNOTATED_CDS"/>
    <property type="molecule type" value="Genomic_DNA"/>
</dbReference>
<dbReference type="EMBL" id="AC007730">
    <property type="status" value="NOT_ANNOTATED_CDS"/>
    <property type="molecule type" value="Genomic_DNA"/>
</dbReference>
<dbReference type="RefSeq" id="NP_085578.1">
    <property type="nucleotide sequence ID" value="NC_001284.2"/>
</dbReference>
<dbReference type="iPTMnet" id="P92556"/>
<dbReference type="PaxDb" id="3702-ATMG01260.1"/>
<dbReference type="EnsemblPlants" id="ATMG01260.1">
    <property type="protein sequence ID" value="ATMG01260.1"/>
    <property type="gene ID" value="ATMG01260"/>
</dbReference>
<dbReference type="Gramene" id="ATMG01260.1">
    <property type="protein sequence ID" value="ATMG01260.1"/>
    <property type="gene ID" value="ATMG01260"/>
</dbReference>
<dbReference type="Araport" id="ATMG01260"/>
<dbReference type="TAIR" id="ATMG01260">
    <property type="gene designation" value="ORF205"/>
</dbReference>
<dbReference type="HOGENOM" id="CLU_1339198_0_0_1"/>
<dbReference type="InParanoid" id="P92556"/>
<dbReference type="PRO" id="PR:P92556"/>
<dbReference type="Proteomes" id="UP000006548">
    <property type="component" value="Mitochondrion MT"/>
</dbReference>
<dbReference type="ExpressionAtlas" id="P92556">
    <property type="expression patterns" value="baseline and differential"/>
</dbReference>
<dbReference type="GO" id="GO:0031966">
    <property type="term" value="C:mitochondrial membrane"/>
    <property type="evidence" value="ECO:0007669"/>
    <property type="project" value="UniProtKB-SubCell"/>
</dbReference>
<reference key="1">
    <citation type="journal article" date="1997" name="Nat. Genet.">
        <title>The mitochondrial genome of Arabidopsis thaliana contains 57 genes in 366,924 nucleotides.</title>
        <authorList>
            <person name="Unseld M."/>
            <person name="Marienfeld J.R."/>
            <person name="Brandt P."/>
            <person name="Brennicke A."/>
        </authorList>
    </citation>
    <scope>NUCLEOTIDE SEQUENCE [LARGE SCALE GENOMIC DNA]</scope>
    <source>
        <strain>cv. C24</strain>
    </source>
</reference>
<reference key="2">
    <citation type="journal article" date="2018" name="Plant Cell">
        <title>Correction of persistent errors in Arabidopsis reference mitochondrial genomes.</title>
        <authorList>
            <person name="Sloan D.B."/>
            <person name="Wu Z."/>
            <person name="Sharbrough J."/>
        </authorList>
    </citation>
    <scope>NUCLEOTIDE SEQUENCE [LARGE SCALE GENOMIC DNA]</scope>
    <source>
        <strain>cv. Columbia</strain>
    </source>
</reference>
<reference key="3">
    <citation type="journal article" date="1999" name="Nature">
        <title>Sequence and analysis of chromosome 2 of the plant Arabidopsis thaliana.</title>
        <authorList>
            <person name="Lin X."/>
            <person name="Kaul S."/>
            <person name="Rounsley S.D."/>
            <person name="Shea T.P."/>
            <person name="Benito M.-I."/>
            <person name="Town C.D."/>
            <person name="Fujii C.Y."/>
            <person name="Mason T.M."/>
            <person name="Bowman C.L."/>
            <person name="Barnstead M.E."/>
            <person name="Feldblyum T.V."/>
            <person name="Buell C.R."/>
            <person name="Ketchum K.A."/>
            <person name="Lee J.J."/>
            <person name="Ronning C.M."/>
            <person name="Koo H.L."/>
            <person name="Moffat K.S."/>
            <person name="Cronin L.A."/>
            <person name="Shen M."/>
            <person name="Pai G."/>
            <person name="Van Aken S."/>
            <person name="Umayam L."/>
            <person name="Tallon L.J."/>
            <person name="Gill J.E."/>
            <person name="Adams M.D."/>
            <person name="Carrera A.J."/>
            <person name="Creasy T.H."/>
            <person name="Goodman H.M."/>
            <person name="Somerville C.R."/>
            <person name="Copenhaver G.P."/>
            <person name="Preuss D."/>
            <person name="Nierman W.C."/>
            <person name="White O."/>
            <person name="Eisen J.A."/>
            <person name="Salzberg S.L."/>
            <person name="Fraser C.M."/>
            <person name="Venter J.C."/>
        </authorList>
    </citation>
    <scope>NUCLEOTIDE SEQUENCE [LARGE SCALE GENOMIC DNA]</scope>
    <source>
        <strain>cv. Columbia</strain>
    </source>
</reference>
<protein>
    <recommendedName>
        <fullName>Uncharacterized mitochondrial protein AtMg01260</fullName>
    </recommendedName>
    <alternativeName>
        <fullName>ORF205</fullName>
    </alternativeName>
</protein>
<evidence type="ECO:0000255" key="1"/>
<evidence type="ECO:0000305" key="2"/>
<geneLocation type="mitochondrion"/>
<proteinExistence type="predicted"/>
<accession>P92556</accession>
<accession>Q1ZXW1</accession>
<feature type="chain" id="PRO_0000196822" description="Uncharacterized mitochondrial protein AtMg01260">
    <location>
        <begin position="1"/>
        <end position="205"/>
    </location>
</feature>
<feature type="transmembrane region" description="Helical" evidence="1">
    <location>
        <begin position="18"/>
        <end position="38"/>
    </location>
</feature>
<feature type="transmembrane region" description="Helical" evidence="1">
    <location>
        <begin position="69"/>
        <end position="89"/>
    </location>
</feature>
<feature type="transmembrane region" description="Helical" evidence="1">
    <location>
        <begin position="106"/>
        <end position="126"/>
    </location>
</feature>
<feature type="transmembrane region" description="Helical" evidence="1">
    <location>
        <begin position="127"/>
        <end position="147"/>
    </location>
</feature>
<feature type="sequence conflict" description="In Ref. 3; AC007730." evidence="2" ref="3">
    <location>
        <begin position="189"/>
        <end position="190"/>
    </location>
</feature>
<comment type="subcellular location">
    <subcellularLocation>
        <location evidence="2">Mitochondrion membrane</location>
        <topology evidence="2">Multi-pass membrane protein</topology>
    </subcellularLocation>
</comment>
<comment type="miscellaneous">
    <text>A stretch of 270 kb of the mitochondrial genome is duplicated within the centromere of chromosome 2 resulting in the duplication of the gene. The expression of the duplicated gene is not demonstrated.</text>
</comment>
<sequence length="205" mass="23690">MQPDLTLLGKLRSTWASATVNVIHPISLCLSWFLGTIGCSSPLPLRCADLRILLLKKKEFCLLPLFYHLGIFQHLFYPIIPLLAFCFYAPRLVCPAASLEFQRRYVVWILAVSRHIVFLENSYYIMLLHPHHLHHPHPPFLIFLFLILRKLRRNRSVKAQRIMQRSCHRLLFAPVGNDSELSAPSAPSESVVPLRRFNRQSVSTV</sequence>
<gene>
    <name type="ordered locus">AtMg01260</name>
</gene>
<keyword id="KW-0472">Membrane</keyword>
<keyword id="KW-0496">Mitochondrion</keyword>
<keyword id="KW-1185">Reference proteome</keyword>
<keyword id="KW-0812">Transmembrane</keyword>
<keyword id="KW-1133">Transmembrane helix</keyword>
<organism>
    <name type="scientific">Arabidopsis thaliana</name>
    <name type="common">Mouse-ear cress</name>
    <dbReference type="NCBI Taxonomy" id="3702"/>
    <lineage>
        <taxon>Eukaryota</taxon>
        <taxon>Viridiplantae</taxon>
        <taxon>Streptophyta</taxon>
        <taxon>Embryophyta</taxon>
        <taxon>Tracheophyta</taxon>
        <taxon>Spermatophyta</taxon>
        <taxon>Magnoliopsida</taxon>
        <taxon>eudicotyledons</taxon>
        <taxon>Gunneridae</taxon>
        <taxon>Pentapetalae</taxon>
        <taxon>rosids</taxon>
        <taxon>malvids</taxon>
        <taxon>Brassicales</taxon>
        <taxon>Brassicaceae</taxon>
        <taxon>Camelineae</taxon>
        <taxon>Arabidopsis</taxon>
    </lineage>
</organism>
<name>M1260_ARATH</name>